<sequence length="30" mass="3311">RICPRILMECSSDSDCLAECICLEQDGFCG</sequence>
<keyword id="KW-0903">Direct protein sequencing</keyword>
<keyword id="KW-1015">Disulfide bond</keyword>
<keyword id="KW-0960">Knottin</keyword>
<keyword id="KW-0646">Protease inhibitor</keyword>
<keyword id="KW-0964">Secreted</keyword>
<keyword id="KW-0722">Serine protease inhibitor</keyword>
<protein>
    <recommendedName>
        <fullName>Trypsin inhibitor 2</fullName>
    </recommendedName>
    <alternativeName>
        <fullName>LCTI-II</fullName>
    </alternativeName>
    <alternativeName>
        <fullName>Trypsin inhibitor II</fullName>
    </alternativeName>
</protein>
<evidence type="ECO:0000250" key="1"/>
<evidence type="ECO:0000305" key="2"/>
<proteinExistence type="evidence at protein level"/>
<name>ITR2_LUFAE</name>
<dbReference type="PIR" id="JS0579">
    <property type="entry name" value="JS0579"/>
</dbReference>
<dbReference type="SMR" id="P25850"/>
<dbReference type="GO" id="GO:0005576">
    <property type="term" value="C:extracellular region"/>
    <property type="evidence" value="ECO:0007669"/>
    <property type="project" value="UniProtKB-SubCell"/>
</dbReference>
<dbReference type="GO" id="GO:0004867">
    <property type="term" value="F:serine-type endopeptidase inhibitor activity"/>
    <property type="evidence" value="ECO:0007669"/>
    <property type="project" value="UniProtKB-KW"/>
</dbReference>
<dbReference type="CDD" id="cd00150">
    <property type="entry name" value="PlantTI"/>
    <property type="match status" value="1"/>
</dbReference>
<dbReference type="Gene3D" id="4.10.75.20">
    <property type="match status" value="1"/>
</dbReference>
<dbReference type="InterPro" id="IPR000737">
    <property type="entry name" value="Prot_inh_squash"/>
</dbReference>
<dbReference type="InterPro" id="IPR011052">
    <property type="entry name" value="Proteinase_amylase_inhib_sf"/>
</dbReference>
<dbReference type="Pfam" id="PF00299">
    <property type="entry name" value="Squash"/>
    <property type="match status" value="1"/>
</dbReference>
<dbReference type="PRINTS" id="PR00293">
    <property type="entry name" value="SQUASHINHBTR"/>
</dbReference>
<dbReference type="SMART" id="SM00286">
    <property type="entry name" value="PTI"/>
    <property type="match status" value="1"/>
</dbReference>
<dbReference type="SUPFAM" id="SSF57027">
    <property type="entry name" value="Plant inhibitors of proteinases and amylases"/>
    <property type="match status" value="1"/>
</dbReference>
<dbReference type="PROSITE" id="PS00286">
    <property type="entry name" value="SQUASH_INHIBITOR"/>
    <property type="match status" value="1"/>
</dbReference>
<comment type="function">
    <text>Inhibits trypsin.</text>
</comment>
<comment type="subcellular location">
    <subcellularLocation>
        <location>Secreted</location>
    </subcellularLocation>
</comment>
<comment type="domain">
    <text evidence="1">The presence of a 'disulfide through disulfide knot' structurally defines this protein as a knottin.</text>
</comment>
<comment type="similarity">
    <text evidence="2">Belongs to the protease inhibitor I7 (squash-type serine protease inhibitor) family.</text>
</comment>
<organism>
    <name type="scientific">Luffa aegyptiaca</name>
    <name type="common">Sponge gourd</name>
    <name type="synonym">Luffa cylindrica</name>
    <dbReference type="NCBI Taxonomy" id="3670"/>
    <lineage>
        <taxon>Eukaryota</taxon>
        <taxon>Viridiplantae</taxon>
        <taxon>Streptophyta</taxon>
        <taxon>Embryophyta</taxon>
        <taxon>Tracheophyta</taxon>
        <taxon>Spermatophyta</taxon>
        <taxon>Magnoliopsida</taxon>
        <taxon>eudicotyledons</taxon>
        <taxon>Gunneridae</taxon>
        <taxon>Pentapetalae</taxon>
        <taxon>rosids</taxon>
        <taxon>fabids</taxon>
        <taxon>Cucurbitales</taxon>
        <taxon>Cucurbitaceae</taxon>
        <taxon>Sicyoeae</taxon>
        <taxon>Luffa</taxon>
    </lineage>
</organism>
<reference key="1">
    <citation type="journal article" date="1991" name="Agric. Biol. Chem.">
        <title>Amino acid sequences of the two smallest trypsin inhibitors from sponge gourd seeds.</title>
        <authorList>
            <person name="Hatakeyama T."/>
            <person name="Hiraoka M."/>
            <person name="Funatsu G."/>
        </authorList>
    </citation>
    <scope>PROTEIN SEQUENCE</scope>
    <source>
        <tissue>Seed</tissue>
    </source>
</reference>
<accession>P25850</accession>
<feature type="peptide" id="PRO_0000044383" description="Trypsin inhibitor 2">
    <location>
        <begin position="1"/>
        <end position="30"/>
    </location>
</feature>
<feature type="site" description="Reactive bond">
    <location>
        <begin position="5"/>
        <end position="6"/>
    </location>
</feature>
<feature type="disulfide bond" evidence="1">
    <location>
        <begin position="3"/>
        <end position="20"/>
    </location>
</feature>
<feature type="disulfide bond" evidence="1">
    <location>
        <begin position="10"/>
        <end position="22"/>
    </location>
</feature>
<feature type="disulfide bond" evidence="1">
    <location>
        <begin position="16"/>
        <end position="29"/>
    </location>
</feature>